<comment type="function">
    <text evidence="1">Required for rescue of stalled ribosomes mediated by trans-translation. Binds to transfer-messenger RNA (tmRNA), required for stable association of tmRNA with ribosomes. tmRNA and SmpB together mimic tRNA shape, replacing the anticodon stem-loop with SmpB. tmRNA is encoded by the ssrA gene; the 2 termini fold to resemble tRNA(Ala) and it encodes a 'tag peptide', a short internal open reading frame. During trans-translation Ala-aminoacylated tmRNA acts like a tRNA, entering the A-site of stalled ribosomes, displacing the stalled mRNA. The ribosome then switches to translate the ORF on the tmRNA; the nascent peptide is terminated with the 'tag peptide' encoded by the tmRNA and targeted for degradation. The ribosome is freed to recommence translation, which seems to be the essential function of trans-translation.</text>
</comment>
<comment type="subcellular location">
    <subcellularLocation>
        <location evidence="1">Cytoplasm</location>
    </subcellularLocation>
    <text evidence="1">The tmRNA-SmpB complex associates with stalled 70S ribosomes.</text>
</comment>
<comment type="similarity">
    <text evidence="1">Belongs to the SmpB family.</text>
</comment>
<keyword id="KW-0963">Cytoplasm</keyword>
<keyword id="KW-1185">Reference proteome</keyword>
<keyword id="KW-0694">RNA-binding</keyword>
<organism>
    <name type="scientific">Pseudomonas aeruginosa (strain ATCC 15692 / DSM 22644 / CIP 104116 / JCM 14847 / LMG 12228 / 1C / PRS 101 / PAO1)</name>
    <dbReference type="NCBI Taxonomy" id="208964"/>
    <lineage>
        <taxon>Bacteria</taxon>
        <taxon>Pseudomonadati</taxon>
        <taxon>Pseudomonadota</taxon>
        <taxon>Gammaproteobacteria</taxon>
        <taxon>Pseudomonadales</taxon>
        <taxon>Pseudomonadaceae</taxon>
        <taxon>Pseudomonas</taxon>
    </lineage>
</organism>
<proteinExistence type="inferred from homology"/>
<accession>Q9HV40</accession>
<dbReference type="EMBL" id="AE004091">
    <property type="protein sequence ID" value="AAG08154.1"/>
    <property type="molecule type" value="Genomic_DNA"/>
</dbReference>
<dbReference type="PIR" id="D83050">
    <property type="entry name" value="D83050"/>
</dbReference>
<dbReference type="RefSeq" id="NP_253456.1">
    <property type="nucleotide sequence ID" value="NC_002516.2"/>
</dbReference>
<dbReference type="RefSeq" id="WP_003100496.1">
    <property type="nucleotide sequence ID" value="NZ_QZGE01000018.1"/>
</dbReference>
<dbReference type="SMR" id="Q9HV40"/>
<dbReference type="FunCoup" id="Q9HV40">
    <property type="interactions" value="543"/>
</dbReference>
<dbReference type="STRING" id="208964.PA4768"/>
<dbReference type="PaxDb" id="208964-PA4768"/>
<dbReference type="DNASU" id="881797"/>
<dbReference type="GeneID" id="77223305"/>
<dbReference type="GeneID" id="881797"/>
<dbReference type="KEGG" id="pae:PA4768"/>
<dbReference type="PATRIC" id="fig|208964.12.peg.4995"/>
<dbReference type="PseudoCAP" id="PA4768"/>
<dbReference type="HOGENOM" id="CLU_108953_3_0_6"/>
<dbReference type="InParanoid" id="Q9HV40"/>
<dbReference type="OrthoDB" id="9805462at2"/>
<dbReference type="PhylomeDB" id="Q9HV40"/>
<dbReference type="BioCyc" id="PAER208964:G1FZ6-4881-MONOMER"/>
<dbReference type="Proteomes" id="UP000002438">
    <property type="component" value="Chromosome"/>
</dbReference>
<dbReference type="GO" id="GO:0005829">
    <property type="term" value="C:cytosol"/>
    <property type="evidence" value="ECO:0000318"/>
    <property type="project" value="GO_Central"/>
</dbReference>
<dbReference type="GO" id="GO:0003723">
    <property type="term" value="F:RNA binding"/>
    <property type="evidence" value="ECO:0000318"/>
    <property type="project" value="GO_Central"/>
</dbReference>
<dbReference type="GO" id="GO:0070929">
    <property type="term" value="P:trans-translation"/>
    <property type="evidence" value="ECO:0007669"/>
    <property type="project" value="UniProtKB-UniRule"/>
</dbReference>
<dbReference type="CDD" id="cd09294">
    <property type="entry name" value="SmpB"/>
    <property type="match status" value="1"/>
</dbReference>
<dbReference type="Gene3D" id="2.40.280.10">
    <property type="match status" value="1"/>
</dbReference>
<dbReference type="HAMAP" id="MF_00023">
    <property type="entry name" value="SmpB"/>
    <property type="match status" value="1"/>
</dbReference>
<dbReference type="InterPro" id="IPR023620">
    <property type="entry name" value="SmpB"/>
</dbReference>
<dbReference type="InterPro" id="IPR000037">
    <property type="entry name" value="SsrA-bd_prot"/>
</dbReference>
<dbReference type="InterPro" id="IPR020081">
    <property type="entry name" value="SsrA-bd_prot_CS"/>
</dbReference>
<dbReference type="NCBIfam" id="NF003843">
    <property type="entry name" value="PRK05422.1"/>
    <property type="match status" value="1"/>
</dbReference>
<dbReference type="NCBIfam" id="TIGR00086">
    <property type="entry name" value="smpB"/>
    <property type="match status" value="1"/>
</dbReference>
<dbReference type="PANTHER" id="PTHR30308:SF2">
    <property type="entry name" value="SSRA-BINDING PROTEIN"/>
    <property type="match status" value="1"/>
</dbReference>
<dbReference type="PANTHER" id="PTHR30308">
    <property type="entry name" value="TMRNA-BINDING COMPONENT OF TRANS-TRANSLATION TAGGING COMPLEX"/>
    <property type="match status" value="1"/>
</dbReference>
<dbReference type="Pfam" id="PF01668">
    <property type="entry name" value="SmpB"/>
    <property type="match status" value="1"/>
</dbReference>
<dbReference type="SUPFAM" id="SSF74982">
    <property type="entry name" value="Small protein B (SmpB)"/>
    <property type="match status" value="1"/>
</dbReference>
<dbReference type="PROSITE" id="PS01317">
    <property type="entry name" value="SSRP"/>
    <property type="match status" value="1"/>
</dbReference>
<reference key="1">
    <citation type="journal article" date="2000" name="Nature">
        <title>Complete genome sequence of Pseudomonas aeruginosa PAO1, an opportunistic pathogen.</title>
        <authorList>
            <person name="Stover C.K."/>
            <person name="Pham X.-Q.T."/>
            <person name="Erwin A.L."/>
            <person name="Mizoguchi S.D."/>
            <person name="Warrener P."/>
            <person name="Hickey M.J."/>
            <person name="Brinkman F.S.L."/>
            <person name="Hufnagle W.O."/>
            <person name="Kowalik D.J."/>
            <person name="Lagrou M."/>
            <person name="Garber R.L."/>
            <person name="Goltry L."/>
            <person name="Tolentino E."/>
            <person name="Westbrock-Wadman S."/>
            <person name="Yuan Y."/>
            <person name="Brody L.L."/>
            <person name="Coulter S.N."/>
            <person name="Folger K.R."/>
            <person name="Kas A."/>
            <person name="Larbig K."/>
            <person name="Lim R.M."/>
            <person name="Smith K.A."/>
            <person name="Spencer D.H."/>
            <person name="Wong G.K.-S."/>
            <person name="Wu Z."/>
            <person name="Paulsen I.T."/>
            <person name="Reizer J."/>
            <person name="Saier M.H. Jr."/>
            <person name="Hancock R.E.W."/>
            <person name="Lory S."/>
            <person name="Olson M.V."/>
        </authorList>
    </citation>
    <scope>NUCLEOTIDE SEQUENCE [LARGE SCALE GENOMIC DNA]</scope>
    <source>
        <strain>ATCC 15692 / DSM 22644 / CIP 104116 / JCM 14847 / LMG 12228 / 1C / PRS 101 / PAO1</strain>
    </source>
</reference>
<feature type="chain" id="PRO_0000103008" description="SsrA-binding protein">
    <location>
        <begin position="1"/>
        <end position="159"/>
    </location>
</feature>
<feature type="region of interest" description="Disordered" evidence="2">
    <location>
        <begin position="132"/>
        <end position="159"/>
    </location>
</feature>
<sequence>MAKQKKHPSGTIAQNKKALHDYFIEQRFEAGVALAGWEVKSLRAGKAQLVDSYVLLKDGEAWLLGSHITPLTTASTHVIADPVRTRKLLLHKRELGKLFGAVQQKGYACVALSMYWKKHLVKCEIALAKGKKDFDKRHTEKERDSDREIQRAMRHGKDD</sequence>
<gene>
    <name evidence="1" type="primary">smpB</name>
    <name type="ordered locus">PA4768</name>
</gene>
<evidence type="ECO:0000255" key="1">
    <source>
        <dbReference type="HAMAP-Rule" id="MF_00023"/>
    </source>
</evidence>
<evidence type="ECO:0000256" key="2">
    <source>
        <dbReference type="SAM" id="MobiDB-lite"/>
    </source>
</evidence>
<name>SSRP_PSEAE</name>
<protein>
    <recommendedName>
        <fullName evidence="1">SsrA-binding protein</fullName>
    </recommendedName>
    <alternativeName>
        <fullName evidence="1">Small protein B</fullName>
    </alternativeName>
</protein>